<keyword id="KW-0002">3D-structure</keyword>
<keyword id="KW-0929">Antimicrobial</keyword>
<keyword id="KW-0903">Direct protein sequencing</keyword>
<keyword id="KW-1015">Disulfide bond</keyword>
<keyword id="KW-0295">Fungicide</keyword>
<keyword id="KW-0611">Plant defense</keyword>
<evidence type="ECO:0000269" key="1">
    <source>
    </source>
</evidence>
<evidence type="ECO:0000305" key="2"/>
<evidence type="ECO:0007829" key="3">
    <source>
        <dbReference type="PDB" id="1JKZ"/>
    </source>
</evidence>
<sequence>KTCEHLADTYRGVCFTNASCDDHCKNKAHLISGTCHNWKCFCTQNC</sequence>
<accession>P81929</accession>
<protein>
    <recommendedName>
        <fullName>Defensin-1</fullName>
    </recommendedName>
    <alternativeName>
        <fullName>Antifungal protein Psd1</fullName>
    </alternativeName>
    <alternativeName>
        <fullName>Defense-related peptide 1</fullName>
    </alternativeName>
</protein>
<name>DEF1_PEA</name>
<comment type="function">
    <text>Possesses antifungal activity sensitive to inorganic cations.</text>
</comment>
<comment type="tissue specificity">
    <text>Epidermis and vascular bundles of pods, stems, roots, leaves and wet or dry seeds.</text>
</comment>
<comment type="developmental stage">
    <text>Mature seed in dormancy.</text>
</comment>
<comment type="similarity">
    <text evidence="2">Belongs to the DEFL family.</text>
</comment>
<reference key="1">
    <citation type="journal article" date="2000" name="Arch. Biochem. Biophys.">
        <title>Characterization of two novel defense peptides from pea (Pisum sativum) seeds.</title>
        <authorList>
            <person name="Almeida M.S."/>
            <person name="Cabral K.M."/>
            <person name="Zingali R.B."/>
            <person name="Kurtenbach E."/>
        </authorList>
    </citation>
    <scope>PROTEIN SEQUENCE</scope>
    <source>
        <strain>cv. Mikado</strain>
        <tissue>Epidermis</tissue>
        <tissue>Seed endosperm</tissue>
    </source>
</reference>
<reference key="2">
    <citation type="journal article" date="2001" name="Arch. Biochem. Biophys.">
        <title>cDNA cloning and heterologous expression of functional cysteine-rich antifungal protein Psd1 in the yeast Pichia pastoris.</title>
        <authorList>
            <person name="Almeida M.S."/>
            <person name="Cabral K.S."/>
            <person name="de Medeiros L.N."/>
            <person name="Valente A.P."/>
            <person name="Almeida F.C."/>
            <person name="Kurtenbach E."/>
        </authorList>
    </citation>
    <scope>NUCLEOTIDE SEQUENCE [MRNA]</scope>
    <scope>PROTEIN SEQUENCE OF 1-23</scope>
    <scope>DISULFIDE BONDS</scope>
</reference>
<reference key="3">
    <citation type="journal article" date="2002" name="J. Mol. Biol.">
        <title>Solution structure of Pisum sativum defensin 1 by high resolution NMR: plant defensins, identical backbone with different mechanisms of action.</title>
        <authorList>
            <person name="Almeida M.S."/>
            <person name="Cabral K.M."/>
            <person name="Kurtenbach E."/>
            <person name="Almeida F.C."/>
            <person name="Valente A.P."/>
        </authorList>
    </citation>
    <scope>STRUCTURE BY NMR</scope>
</reference>
<proteinExistence type="evidence at protein level"/>
<organism>
    <name type="scientific">Pisum sativum</name>
    <name type="common">Garden pea</name>
    <name type="synonym">Lathyrus oleraceus</name>
    <dbReference type="NCBI Taxonomy" id="3888"/>
    <lineage>
        <taxon>Eukaryota</taxon>
        <taxon>Viridiplantae</taxon>
        <taxon>Streptophyta</taxon>
        <taxon>Embryophyta</taxon>
        <taxon>Tracheophyta</taxon>
        <taxon>Spermatophyta</taxon>
        <taxon>Magnoliopsida</taxon>
        <taxon>eudicotyledons</taxon>
        <taxon>Gunneridae</taxon>
        <taxon>Pentapetalae</taxon>
        <taxon>rosids</taxon>
        <taxon>fabids</taxon>
        <taxon>Fabales</taxon>
        <taxon>Fabaceae</taxon>
        <taxon>Papilionoideae</taxon>
        <taxon>50 kb inversion clade</taxon>
        <taxon>NPAAA clade</taxon>
        <taxon>Hologalegina</taxon>
        <taxon>IRL clade</taxon>
        <taxon>Fabeae</taxon>
        <taxon>Pisum</taxon>
    </lineage>
</organism>
<dbReference type="PDB" id="1JKZ">
    <property type="method" value="NMR"/>
    <property type="chains" value="A=1-46"/>
</dbReference>
<dbReference type="PDBsum" id="1JKZ"/>
<dbReference type="SMR" id="P81929"/>
<dbReference type="EvolutionaryTrace" id="P81929"/>
<dbReference type="GO" id="GO:0050832">
    <property type="term" value="P:defense response to fungus"/>
    <property type="evidence" value="ECO:0007669"/>
    <property type="project" value="UniProtKB-KW"/>
</dbReference>
<dbReference type="GO" id="GO:0031640">
    <property type="term" value="P:killing of cells of another organism"/>
    <property type="evidence" value="ECO:0007669"/>
    <property type="project" value="UniProtKB-KW"/>
</dbReference>
<dbReference type="Gene3D" id="3.30.30.10">
    <property type="entry name" value="Knottin, scorpion toxin-like"/>
    <property type="match status" value="1"/>
</dbReference>
<dbReference type="InterPro" id="IPR008176">
    <property type="entry name" value="Defensin_plant"/>
</dbReference>
<dbReference type="InterPro" id="IPR003614">
    <property type="entry name" value="Scorpion_toxin-like"/>
</dbReference>
<dbReference type="InterPro" id="IPR036574">
    <property type="entry name" value="Scorpion_toxin-like_sf"/>
</dbReference>
<dbReference type="Pfam" id="PF00304">
    <property type="entry name" value="Gamma-thionin"/>
    <property type="match status" value="1"/>
</dbReference>
<dbReference type="SMART" id="SM00505">
    <property type="entry name" value="Knot1"/>
    <property type="match status" value="1"/>
</dbReference>
<dbReference type="SUPFAM" id="SSF57095">
    <property type="entry name" value="Scorpion toxin-like"/>
    <property type="match status" value="1"/>
</dbReference>
<dbReference type="PROSITE" id="PS00940">
    <property type="entry name" value="GAMMA_THIONIN"/>
    <property type="match status" value="1"/>
</dbReference>
<feature type="chain" id="PRO_0000074242" description="Defensin-1">
    <location>
        <begin position="1"/>
        <end position="46"/>
    </location>
</feature>
<feature type="disulfide bond" evidence="1">
    <location>
        <begin position="3"/>
        <end position="46"/>
    </location>
</feature>
<feature type="disulfide bond" evidence="1">
    <location>
        <begin position="14"/>
        <end position="35"/>
    </location>
</feature>
<feature type="disulfide bond" evidence="1">
    <location>
        <begin position="20"/>
        <end position="40"/>
    </location>
</feature>
<feature type="disulfide bond" evidence="1">
    <location>
        <begin position="24"/>
        <end position="42"/>
    </location>
</feature>
<feature type="sequence conflict" description="In Ref. 2; AA sequence." evidence="2" ref="2">
    <original>T</original>
    <variation>G</variation>
    <location>
        <position position="43"/>
    </location>
</feature>
<feature type="strand" evidence="3">
    <location>
        <begin position="2"/>
        <end position="6"/>
    </location>
</feature>
<feature type="strand" evidence="3">
    <location>
        <begin position="8"/>
        <end position="10"/>
    </location>
</feature>
<feature type="helix" evidence="3">
    <location>
        <begin position="17"/>
        <end position="27"/>
    </location>
</feature>
<feature type="strand" evidence="3">
    <location>
        <begin position="33"/>
        <end position="36"/>
    </location>
</feature>
<feature type="strand" evidence="3">
    <location>
        <begin position="39"/>
        <end position="45"/>
    </location>
</feature>